<name>HOA1_RHOJR</name>
<comment type="catalytic activity">
    <reaction evidence="1">
        <text>(S)-4-hydroxy-2-oxopentanoate = acetaldehyde + pyruvate</text>
        <dbReference type="Rhea" id="RHEA:22624"/>
        <dbReference type="ChEBI" id="CHEBI:15343"/>
        <dbReference type="ChEBI" id="CHEBI:15361"/>
        <dbReference type="ChEBI" id="CHEBI:73143"/>
        <dbReference type="EC" id="4.1.3.39"/>
    </reaction>
</comment>
<comment type="similarity">
    <text evidence="1">Belongs to the 4-hydroxy-2-oxovalerate aldolase family.</text>
</comment>
<sequence>MSTTTPTADDDDVTLYIQDVTLRDGMHATRHHITPENVAVIAGALDSAGVDAIEVSHGDGLAGHSLTYGPGSNTDWEWIEAAAAVVHCAKLTTLLLPGIGTVAELKRARALGVQSVRVATHCTEADVSAQHISTARELGMDVSGFLMMSHLAEPQQLAEQAKLMESYGAHCVYVTDSGGRLTMDGVRQRVRAYRDILDAETQIGIHAHQNLSLSVANSVVAVEEGVTRVDASLAGHGAGAGNCPIEPFVAVADLHGWKHNCDLFALQDAADDVVRPLQDRPVQVDRETLTLGYAGVYSSFLRHAETAAKQYGLDTRQILLAVGERGLVGGQEDLITDIALDLAARQ</sequence>
<reference key="1">
    <citation type="journal article" date="2006" name="Proc. Natl. Acad. Sci. U.S.A.">
        <title>The complete genome of Rhodococcus sp. RHA1 provides insights into a catabolic powerhouse.</title>
        <authorList>
            <person name="McLeod M.P."/>
            <person name="Warren R.L."/>
            <person name="Hsiao W.W.L."/>
            <person name="Araki N."/>
            <person name="Myhre M."/>
            <person name="Fernandes C."/>
            <person name="Miyazawa D."/>
            <person name="Wong W."/>
            <person name="Lillquist A.L."/>
            <person name="Wang D."/>
            <person name="Dosanjh M."/>
            <person name="Hara H."/>
            <person name="Petrescu A."/>
            <person name="Morin R.D."/>
            <person name="Yang G."/>
            <person name="Stott J.M."/>
            <person name="Schein J.E."/>
            <person name="Shin H."/>
            <person name="Smailus D."/>
            <person name="Siddiqui A.S."/>
            <person name="Marra M.A."/>
            <person name="Jones S.J.M."/>
            <person name="Holt R."/>
            <person name="Brinkman F.S.L."/>
            <person name="Miyauchi K."/>
            <person name="Fukuda M."/>
            <person name="Davies J.E."/>
            <person name="Mohn W.W."/>
            <person name="Eltis L.D."/>
        </authorList>
    </citation>
    <scope>NUCLEOTIDE SEQUENCE [LARGE SCALE GENOMIC DNA]</scope>
    <source>
        <strain>RHA1</strain>
    </source>
</reference>
<protein>
    <recommendedName>
        <fullName evidence="1">4-hydroxy-2-oxovalerate aldolase 1</fullName>
        <shortName evidence="1">HOA 1</shortName>
        <ecNumber evidence="1">4.1.3.39</ecNumber>
    </recommendedName>
    <alternativeName>
        <fullName evidence="1">4-hydroxy-2-keto-pentanoic acid aldolase 1</fullName>
    </alternativeName>
    <alternativeName>
        <fullName evidence="1">4-hydroxy-2-oxopentanoate aldolase 1</fullName>
    </alternativeName>
</protein>
<proteinExistence type="inferred from homology"/>
<organism>
    <name type="scientific">Rhodococcus jostii (strain RHA1)</name>
    <dbReference type="NCBI Taxonomy" id="101510"/>
    <lineage>
        <taxon>Bacteria</taxon>
        <taxon>Bacillati</taxon>
        <taxon>Actinomycetota</taxon>
        <taxon>Actinomycetes</taxon>
        <taxon>Mycobacteriales</taxon>
        <taxon>Nocardiaceae</taxon>
        <taxon>Rhodococcus</taxon>
    </lineage>
</organism>
<accession>Q0SJD5</accession>
<dbReference type="EC" id="4.1.3.39" evidence="1"/>
<dbReference type="EMBL" id="CP000431">
    <property type="protein sequence ID" value="ABG92351.1"/>
    <property type="molecule type" value="Genomic_DNA"/>
</dbReference>
<dbReference type="RefSeq" id="WP_011593777.1">
    <property type="nucleotide sequence ID" value="NC_008268.1"/>
</dbReference>
<dbReference type="SMR" id="Q0SJD5"/>
<dbReference type="KEGG" id="rha:RHA1_ro00515"/>
<dbReference type="PATRIC" id="fig|101510.16.peg.545"/>
<dbReference type="eggNOG" id="COG0119">
    <property type="taxonomic scope" value="Bacteria"/>
</dbReference>
<dbReference type="HOGENOM" id="CLU_049173_0_0_11"/>
<dbReference type="OrthoDB" id="9803573at2"/>
<dbReference type="Proteomes" id="UP000008710">
    <property type="component" value="Chromosome"/>
</dbReference>
<dbReference type="GO" id="GO:0003852">
    <property type="term" value="F:2-isopropylmalate synthase activity"/>
    <property type="evidence" value="ECO:0007669"/>
    <property type="project" value="TreeGrafter"/>
</dbReference>
<dbReference type="GO" id="GO:0008701">
    <property type="term" value="F:4-hydroxy-2-oxovalerate aldolase activity"/>
    <property type="evidence" value="ECO:0007669"/>
    <property type="project" value="UniProtKB-UniRule"/>
</dbReference>
<dbReference type="GO" id="GO:0030145">
    <property type="term" value="F:manganese ion binding"/>
    <property type="evidence" value="ECO:0007669"/>
    <property type="project" value="UniProtKB-UniRule"/>
</dbReference>
<dbReference type="GO" id="GO:0009056">
    <property type="term" value="P:catabolic process"/>
    <property type="evidence" value="ECO:0007669"/>
    <property type="project" value="UniProtKB-KW"/>
</dbReference>
<dbReference type="GO" id="GO:0009098">
    <property type="term" value="P:L-leucine biosynthetic process"/>
    <property type="evidence" value="ECO:0007669"/>
    <property type="project" value="TreeGrafter"/>
</dbReference>
<dbReference type="CDD" id="cd07943">
    <property type="entry name" value="DRE_TIM_HOA"/>
    <property type="match status" value="1"/>
</dbReference>
<dbReference type="Gene3D" id="1.10.8.60">
    <property type="match status" value="1"/>
</dbReference>
<dbReference type="Gene3D" id="3.20.20.70">
    <property type="entry name" value="Aldolase class I"/>
    <property type="match status" value="1"/>
</dbReference>
<dbReference type="HAMAP" id="MF_01656">
    <property type="entry name" value="HOA"/>
    <property type="match status" value="1"/>
</dbReference>
<dbReference type="InterPro" id="IPR050073">
    <property type="entry name" value="2-IPM_HCS-like"/>
</dbReference>
<dbReference type="InterPro" id="IPR017629">
    <property type="entry name" value="4OH_2_O-val_aldolase"/>
</dbReference>
<dbReference type="InterPro" id="IPR013785">
    <property type="entry name" value="Aldolase_TIM"/>
</dbReference>
<dbReference type="InterPro" id="IPR012425">
    <property type="entry name" value="DmpG_comm"/>
</dbReference>
<dbReference type="InterPro" id="IPR035685">
    <property type="entry name" value="DRE_TIM_HOA"/>
</dbReference>
<dbReference type="InterPro" id="IPR000891">
    <property type="entry name" value="PYR_CT"/>
</dbReference>
<dbReference type="NCBIfam" id="TIGR03217">
    <property type="entry name" value="4OH_2_O_val_ald"/>
    <property type="match status" value="1"/>
</dbReference>
<dbReference type="NCBIfam" id="NF006049">
    <property type="entry name" value="PRK08195.1"/>
    <property type="match status" value="1"/>
</dbReference>
<dbReference type="PANTHER" id="PTHR10277:SF9">
    <property type="entry name" value="2-ISOPROPYLMALATE SYNTHASE 1, CHLOROPLASTIC-RELATED"/>
    <property type="match status" value="1"/>
</dbReference>
<dbReference type="PANTHER" id="PTHR10277">
    <property type="entry name" value="HOMOCITRATE SYNTHASE-RELATED"/>
    <property type="match status" value="1"/>
</dbReference>
<dbReference type="Pfam" id="PF07836">
    <property type="entry name" value="DmpG_comm"/>
    <property type="match status" value="1"/>
</dbReference>
<dbReference type="Pfam" id="PF00682">
    <property type="entry name" value="HMGL-like"/>
    <property type="match status" value="1"/>
</dbReference>
<dbReference type="SUPFAM" id="SSF51569">
    <property type="entry name" value="Aldolase"/>
    <property type="match status" value="1"/>
</dbReference>
<dbReference type="SUPFAM" id="SSF89000">
    <property type="entry name" value="post-HMGL domain-like"/>
    <property type="match status" value="1"/>
</dbReference>
<dbReference type="PROSITE" id="PS50991">
    <property type="entry name" value="PYR_CT"/>
    <property type="match status" value="1"/>
</dbReference>
<gene>
    <name type="ordered locus">RHA1_ro00515</name>
</gene>
<keyword id="KW-0058">Aromatic hydrocarbons catabolism</keyword>
<keyword id="KW-0456">Lyase</keyword>
<keyword id="KW-0464">Manganese</keyword>
<keyword id="KW-0479">Metal-binding</keyword>
<evidence type="ECO:0000255" key="1">
    <source>
        <dbReference type="HAMAP-Rule" id="MF_01656"/>
    </source>
</evidence>
<feature type="chain" id="PRO_0000387907" description="4-hydroxy-2-oxovalerate aldolase 1">
    <location>
        <begin position="1"/>
        <end position="346"/>
    </location>
</feature>
<feature type="domain" description="Pyruvate carboxyltransferase" evidence="1">
    <location>
        <begin position="15"/>
        <end position="267"/>
    </location>
</feature>
<feature type="active site" description="Proton acceptor" evidence="1">
    <location>
        <position position="27"/>
    </location>
</feature>
<feature type="binding site" evidence="1">
    <location>
        <begin position="23"/>
        <end position="24"/>
    </location>
    <ligand>
        <name>substrate</name>
    </ligand>
</feature>
<feature type="binding site" evidence="1">
    <location>
        <position position="24"/>
    </location>
    <ligand>
        <name>Mn(2+)</name>
        <dbReference type="ChEBI" id="CHEBI:29035"/>
    </ligand>
</feature>
<feature type="binding site" evidence="1">
    <location>
        <position position="177"/>
    </location>
    <ligand>
        <name>substrate</name>
    </ligand>
</feature>
<feature type="binding site" evidence="1">
    <location>
        <position position="206"/>
    </location>
    <ligand>
        <name>Mn(2+)</name>
        <dbReference type="ChEBI" id="CHEBI:29035"/>
    </ligand>
</feature>
<feature type="binding site" evidence="1">
    <location>
        <position position="206"/>
    </location>
    <ligand>
        <name>substrate</name>
    </ligand>
</feature>
<feature type="binding site" evidence="1">
    <location>
        <position position="208"/>
    </location>
    <ligand>
        <name>Mn(2+)</name>
        <dbReference type="ChEBI" id="CHEBI:29035"/>
    </ligand>
</feature>
<feature type="binding site" evidence="1">
    <location>
        <position position="297"/>
    </location>
    <ligand>
        <name>substrate</name>
    </ligand>
</feature>
<feature type="site" description="Transition state stabilizer" evidence="1">
    <location>
        <position position="23"/>
    </location>
</feature>